<accession>B4XSY5</accession>
<comment type="function">
    <text evidence="1">Interferes with one step of hemostasis (modulation of platelet aggregation, or coagulation cascade, for example).</text>
</comment>
<comment type="subunit">
    <text evidence="1">Heterodimer; disulfide-linked.</text>
</comment>
<comment type="subcellular location">
    <subcellularLocation>
        <location evidence="1">Secreted</location>
    </subcellularLocation>
</comment>
<comment type="tissue specificity">
    <text>Expressed by the venom gland.</text>
</comment>
<comment type="miscellaneous">
    <text>Shows greater sequence similarity to the alpha than beta subunits compared to other heterodimer snaclecs.</text>
</comment>
<comment type="similarity">
    <text evidence="3">Belongs to the snaclec family.</text>
</comment>
<dbReference type="EMBL" id="EU085447">
    <property type="protein sequence ID" value="ABW82657.1"/>
    <property type="molecule type" value="mRNA"/>
</dbReference>
<dbReference type="SMR" id="B4XSY5"/>
<dbReference type="GO" id="GO:0005576">
    <property type="term" value="C:extracellular region"/>
    <property type="evidence" value="ECO:0007669"/>
    <property type="project" value="UniProtKB-SubCell"/>
</dbReference>
<dbReference type="GO" id="GO:0090729">
    <property type="term" value="F:toxin activity"/>
    <property type="evidence" value="ECO:0007669"/>
    <property type="project" value="UniProtKB-KW"/>
</dbReference>
<dbReference type="FunFam" id="3.10.100.10:FF:000087">
    <property type="entry name" value="Snaclec rhodocetin subunit delta"/>
    <property type="match status" value="1"/>
</dbReference>
<dbReference type="Gene3D" id="3.10.100.10">
    <property type="entry name" value="Mannose-Binding Protein A, subunit A"/>
    <property type="match status" value="1"/>
</dbReference>
<dbReference type="InterPro" id="IPR001304">
    <property type="entry name" value="C-type_lectin-like"/>
</dbReference>
<dbReference type="InterPro" id="IPR016186">
    <property type="entry name" value="C-type_lectin-like/link_sf"/>
</dbReference>
<dbReference type="InterPro" id="IPR050111">
    <property type="entry name" value="C-type_lectin/snaclec_domain"/>
</dbReference>
<dbReference type="InterPro" id="IPR018378">
    <property type="entry name" value="C-type_lectin_CS"/>
</dbReference>
<dbReference type="InterPro" id="IPR016187">
    <property type="entry name" value="CTDL_fold"/>
</dbReference>
<dbReference type="PANTHER" id="PTHR22803">
    <property type="entry name" value="MANNOSE, PHOSPHOLIPASE, LECTIN RECEPTOR RELATED"/>
    <property type="match status" value="1"/>
</dbReference>
<dbReference type="Pfam" id="PF00059">
    <property type="entry name" value="Lectin_C"/>
    <property type="match status" value="1"/>
</dbReference>
<dbReference type="PRINTS" id="PR01504">
    <property type="entry name" value="PNCREATITSAP"/>
</dbReference>
<dbReference type="SMART" id="SM00034">
    <property type="entry name" value="CLECT"/>
    <property type="match status" value="1"/>
</dbReference>
<dbReference type="SUPFAM" id="SSF56436">
    <property type="entry name" value="C-type lectin-like"/>
    <property type="match status" value="1"/>
</dbReference>
<dbReference type="PROSITE" id="PS00615">
    <property type="entry name" value="C_TYPE_LECTIN_1"/>
    <property type="match status" value="1"/>
</dbReference>
<dbReference type="PROSITE" id="PS50041">
    <property type="entry name" value="C_TYPE_LECTIN_2"/>
    <property type="match status" value="1"/>
</dbReference>
<keyword id="KW-1015">Disulfide bond</keyword>
<keyword id="KW-1199">Hemostasis impairing toxin</keyword>
<keyword id="KW-0964">Secreted</keyword>
<keyword id="KW-0732">Signal</keyword>
<keyword id="KW-0800">Toxin</keyword>
<name>SLAA_MACLB</name>
<feature type="signal peptide" evidence="1">
    <location>
        <begin position="1"/>
        <end position="23"/>
    </location>
</feature>
<feature type="chain" id="PRO_0000356326" description="Snaclec A10">
    <location>
        <begin position="24"/>
        <end position="156"/>
    </location>
</feature>
<feature type="domain" description="C-type lectin" evidence="2">
    <location>
        <begin position="34"/>
        <end position="155"/>
    </location>
</feature>
<feature type="disulfide bond" evidence="2">
    <location>
        <begin position="27"/>
        <end position="38"/>
    </location>
</feature>
<feature type="disulfide bond" evidence="2">
    <location>
        <begin position="55"/>
        <end position="154"/>
    </location>
</feature>
<feature type="disulfide bond" description="Interchain" evidence="2">
    <location>
        <position position="106"/>
    </location>
</feature>
<feature type="disulfide bond" evidence="2">
    <location>
        <begin position="129"/>
        <end position="146"/>
    </location>
</feature>
<protein>
    <recommendedName>
        <fullName>Snaclec A10</fullName>
    </recommendedName>
    <alternativeName>
        <fullName>C-type lectin A10</fullName>
    </alternativeName>
</protein>
<sequence>MGRSISVSFGLLVVFLSLSGIGADFDCPSGWSAYDQHCYQAVDEPKSWADAEKFCTEQANGGHLVSIDSKKEANFVAELVSQNIKETRRTDFVWIGLRAEDKRQHCSSEWSDGSSINYQNWIEAESKKCLGLEKQTRYRKWVNLNCGQPYRFTCEI</sequence>
<reference key="1">
    <citation type="journal article" date="2009" name="Toxicon">
        <title>C-type lectin protein isoforms of Macrovipera lebetina: cDNA cloning and genetic diversity.</title>
        <authorList>
            <person name="Jebali J."/>
            <person name="Bazaa A."/>
            <person name="Sarray S."/>
            <person name="Benhaj K."/>
            <person name="Karboul A."/>
            <person name="El Ayeb M."/>
            <person name="Marrakchi N."/>
            <person name="Gargouri A."/>
        </authorList>
    </citation>
    <scope>NUCLEOTIDE SEQUENCE [MRNA]</scope>
</reference>
<organism>
    <name type="scientific">Macrovipera lebetinus</name>
    <name type="common">Levantine viper</name>
    <name type="synonym">Vipera lebetina</name>
    <dbReference type="NCBI Taxonomy" id="3148341"/>
    <lineage>
        <taxon>Eukaryota</taxon>
        <taxon>Metazoa</taxon>
        <taxon>Chordata</taxon>
        <taxon>Craniata</taxon>
        <taxon>Vertebrata</taxon>
        <taxon>Euteleostomi</taxon>
        <taxon>Lepidosauria</taxon>
        <taxon>Squamata</taxon>
        <taxon>Bifurcata</taxon>
        <taxon>Unidentata</taxon>
        <taxon>Episquamata</taxon>
        <taxon>Toxicofera</taxon>
        <taxon>Serpentes</taxon>
        <taxon>Colubroidea</taxon>
        <taxon>Viperidae</taxon>
        <taxon>Viperinae</taxon>
        <taxon>Macrovipera</taxon>
    </lineage>
</organism>
<proteinExistence type="evidence at transcript level"/>
<evidence type="ECO:0000250" key="1"/>
<evidence type="ECO:0000255" key="2">
    <source>
        <dbReference type="PROSITE-ProRule" id="PRU00040"/>
    </source>
</evidence>
<evidence type="ECO:0000305" key="3"/>